<organism>
    <name type="scientific">Homo sapiens</name>
    <name type="common">Human</name>
    <dbReference type="NCBI Taxonomy" id="9606"/>
    <lineage>
        <taxon>Eukaryota</taxon>
        <taxon>Metazoa</taxon>
        <taxon>Chordata</taxon>
        <taxon>Craniata</taxon>
        <taxon>Vertebrata</taxon>
        <taxon>Euteleostomi</taxon>
        <taxon>Mammalia</taxon>
        <taxon>Eutheria</taxon>
        <taxon>Euarchontoglires</taxon>
        <taxon>Primates</taxon>
        <taxon>Haplorrhini</taxon>
        <taxon>Catarrhini</taxon>
        <taxon>Hominidae</taxon>
        <taxon>Homo</taxon>
    </lineage>
</organism>
<sequence length="131" mass="14711">MADVVVGKDKGGEQRLISLPLSRIRVIMKSSPEVSSINQEALVLTAKATELFVQCLATYSYRHGSGKEKKVLTYSDLANTAQQSETFQFLADILPKKILASKYLKMLKEEKREEDEENDNDNESDHDEADS</sequence>
<name>CHRC1_HUMAN</name>
<dbReference type="EMBL" id="AF226076">
    <property type="protein sequence ID" value="AAF72416.1"/>
    <property type="molecule type" value="mRNA"/>
</dbReference>
<dbReference type="EMBL" id="AK023537">
    <property type="protein sequence ID" value="BAB14601.1"/>
    <property type="molecule type" value="mRNA"/>
</dbReference>
<dbReference type="EMBL" id="BC015891">
    <property type="protein sequence ID" value="AAH15891.1"/>
    <property type="molecule type" value="mRNA"/>
</dbReference>
<dbReference type="CCDS" id="CCDS6379.1"/>
<dbReference type="RefSeq" id="NP_059140.1">
    <property type="nucleotide sequence ID" value="NM_017444.6"/>
</dbReference>
<dbReference type="SMR" id="Q9NRG0"/>
<dbReference type="BioGRID" id="119904">
    <property type="interactions" value="77"/>
</dbReference>
<dbReference type="ComplexPortal" id="CPX-785">
    <property type="entry name" value="CHRAC chromatin remodeling complex"/>
</dbReference>
<dbReference type="CORUM" id="Q9NRG0"/>
<dbReference type="FunCoup" id="Q9NRG0">
    <property type="interactions" value="1644"/>
</dbReference>
<dbReference type="IntAct" id="Q9NRG0">
    <property type="interactions" value="28"/>
</dbReference>
<dbReference type="MINT" id="Q9NRG0"/>
<dbReference type="STRING" id="9606.ENSP00000220913"/>
<dbReference type="GlyGen" id="Q9NRG0">
    <property type="glycosylation" value="1 site, 1 O-linked glycan (1 site)"/>
</dbReference>
<dbReference type="iPTMnet" id="Q9NRG0"/>
<dbReference type="PhosphoSitePlus" id="Q9NRG0"/>
<dbReference type="BioMuta" id="CHRAC1"/>
<dbReference type="DMDM" id="22653683"/>
<dbReference type="jPOST" id="Q9NRG0"/>
<dbReference type="MassIVE" id="Q9NRG0"/>
<dbReference type="PaxDb" id="9606-ENSP00000220913"/>
<dbReference type="PeptideAtlas" id="Q9NRG0"/>
<dbReference type="ProteomicsDB" id="82351"/>
<dbReference type="Pumba" id="Q9NRG0"/>
<dbReference type="TopDownProteomics" id="Q9NRG0"/>
<dbReference type="Antibodypedia" id="27623">
    <property type="antibodies" value="190 antibodies from 29 providers"/>
</dbReference>
<dbReference type="DNASU" id="54108"/>
<dbReference type="Ensembl" id="ENST00000220913.10">
    <property type="protein sequence ID" value="ENSP00000220913.5"/>
    <property type="gene ID" value="ENSG00000104472.10"/>
</dbReference>
<dbReference type="GeneID" id="54108"/>
<dbReference type="KEGG" id="hsa:54108"/>
<dbReference type="MANE-Select" id="ENST00000220913.10">
    <property type="protein sequence ID" value="ENSP00000220913.5"/>
    <property type="RefSeq nucleotide sequence ID" value="NM_017444.6"/>
    <property type="RefSeq protein sequence ID" value="NP_059140.1"/>
</dbReference>
<dbReference type="UCSC" id="uc003yvl.4">
    <property type="organism name" value="human"/>
</dbReference>
<dbReference type="AGR" id="HGNC:13544"/>
<dbReference type="CTD" id="54108"/>
<dbReference type="DisGeNET" id="54108"/>
<dbReference type="GeneCards" id="CHRAC1"/>
<dbReference type="HGNC" id="HGNC:13544">
    <property type="gene designation" value="CHRAC1"/>
</dbReference>
<dbReference type="HPA" id="ENSG00000104472">
    <property type="expression patterns" value="Low tissue specificity"/>
</dbReference>
<dbReference type="MIM" id="607268">
    <property type="type" value="gene"/>
</dbReference>
<dbReference type="neXtProt" id="NX_Q9NRG0"/>
<dbReference type="OpenTargets" id="ENSG00000104472"/>
<dbReference type="PharmGKB" id="PA26481"/>
<dbReference type="VEuPathDB" id="HostDB:ENSG00000104472"/>
<dbReference type="eggNOG" id="KOG1657">
    <property type="taxonomic scope" value="Eukaryota"/>
</dbReference>
<dbReference type="GeneTree" id="ENSGT00510000048543"/>
<dbReference type="HOGENOM" id="CLU_045277_11_2_1"/>
<dbReference type="InParanoid" id="Q9NRG0"/>
<dbReference type="OMA" id="FLEYKHI"/>
<dbReference type="OrthoDB" id="1291358at2759"/>
<dbReference type="PAN-GO" id="Q9NRG0">
    <property type="GO annotations" value="2 GO annotations based on evolutionary models"/>
</dbReference>
<dbReference type="PhylomeDB" id="Q9NRG0"/>
<dbReference type="TreeFam" id="TF350392"/>
<dbReference type="PathwayCommons" id="Q9NRG0"/>
<dbReference type="SignaLink" id="Q9NRG0"/>
<dbReference type="BioGRID-ORCS" id="54108">
    <property type="hits" value="24 hits in 1160 CRISPR screens"/>
</dbReference>
<dbReference type="ChiTaRS" id="CHRAC1">
    <property type="organism name" value="human"/>
</dbReference>
<dbReference type="GenomeRNAi" id="54108"/>
<dbReference type="Pharos" id="Q9NRG0">
    <property type="development level" value="Tbio"/>
</dbReference>
<dbReference type="PRO" id="PR:Q9NRG0"/>
<dbReference type="Proteomes" id="UP000005640">
    <property type="component" value="Chromosome 8"/>
</dbReference>
<dbReference type="RNAct" id="Q9NRG0">
    <property type="molecule type" value="protein"/>
</dbReference>
<dbReference type="Bgee" id="ENSG00000104472">
    <property type="expression patterns" value="Expressed in epithelial cell of pancreas and 149 other cell types or tissues"/>
</dbReference>
<dbReference type="ExpressionAtlas" id="Q9NRG0">
    <property type="expression patterns" value="baseline and differential"/>
</dbReference>
<dbReference type="GO" id="GO:0008623">
    <property type="term" value="C:CHRAC"/>
    <property type="evidence" value="ECO:0000318"/>
    <property type="project" value="GO_Central"/>
</dbReference>
<dbReference type="GO" id="GO:0008622">
    <property type="term" value="C:epsilon DNA polymerase complex"/>
    <property type="evidence" value="ECO:0000303"/>
    <property type="project" value="UniProtKB"/>
</dbReference>
<dbReference type="GO" id="GO:0005634">
    <property type="term" value="C:nucleus"/>
    <property type="evidence" value="ECO:0000318"/>
    <property type="project" value="GO_Central"/>
</dbReference>
<dbReference type="GO" id="GO:0005721">
    <property type="term" value="C:pericentric heterochromatin"/>
    <property type="evidence" value="ECO:0000266"/>
    <property type="project" value="ComplexPortal"/>
</dbReference>
<dbReference type="GO" id="GO:0003677">
    <property type="term" value="F:DNA binding"/>
    <property type="evidence" value="ECO:0000303"/>
    <property type="project" value="UniProtKB"/>
</dbReference>
<dbReference type="GO" id="GO:0003887">
    <property type="term" value="F:DNA-directed DNA polymerase activity"/>
    <property type="evidence" value="ECO:0000303"/>
    <property type="project" value="UniProtKB"/>
</dbReference>
<dbReference type="GO" id="GO:0046982">
    <property type="term" value="F:protein heterodimerization activity"/>
    <property type="evidence" value="ECO:0007669"/>
    <property type="project" value="InterPro"/>
</dbReference>
<dbReference type="GO" id="GO:0006338">
    <property type="term" value="P:chromatin remodeling"/>
    <property type="evidence" value="ECO:0000314"/>
    <property type="project" value="ComplexPortal"/>
</dbReference>
<dbReference type="GO" id="GO:0006261">
    <property type="term" value="P:DNA-templated DNA replication"/>
    <property type="evidence" value="ECO:0000318"/>
    <property type="project" value="GO_Central"/>
</dbReference>
<dbReference type="GO" id="GO:0006334">
    <property type="term" value="P:nucleosome assembly"/>
    <property type="evidence" value="ECO:0000314"/>
    <property type="project" value="ComplexPortal"/>
</dbReference>
<dbReference type="GO" id="GO:0006275">
    <property type="term" value="P:regulation of DNA replication"/>
    <property type="evidence" value="ECO:0000315"/>
    <property type="project" value="ComplexPortal"/>
</dbReference>
<dbReference type="CDD" id="cd22924">
    <property type="entry name" value="HFD_CHRAC1-like"/>
    <property type="match status" value="1"/>
</dbReference>
<dbReference type="FunFam" id="1.10.20.10:FF:000048">
    <property type="entry name" value="Chromatin accessibility complex subunit 1"/>
    <property type="match status" value="1"/>
</dbReference>
<dbReference type="Gene3D" id="1.10.20.10">
    <property type="entry name" value="Histone, subunit A"/>
    <property type="match status" value="1"/>
</dbReference>
<dbReference type="InterPro" id="IPR003958">
    <property type="entry name" value="CBFA_NFYB_domain"/>
</dbReference>
<dbReference type="InterPro" id="IPR009072">
    <property type="entry name" value="Histone-fold"/>
</dbReference>
<dbReference type="InterPro" id="IPR050568">
    <property type="entry name" value="Transcr_DNA_Rep_Reg"/>
</dbReference>
<dbReference type="PANTHER" id="PTHR10252:SF54">
    <property type="entry name" value="CHROMATIN ACCESSIBILITY COMPLEX PROTEIN 1"/>
    <property type="match status" value="1"/>
</dbReference>
<dbReference type="PANTHER" id="PTHR10252">
    <property type="entry name" value="HISTONE-LIKE TRANSCRIPTION FACTOR CCAAT-RELATED"/>
    <property type="match status" value="1"/>
</dbReference>
<dbReference type="Pfam" id="PF00808">
    <property type="entry name" value="CBFD_NFYB_HMF"/>
    <property type="match status" value="1"/>
</dbReference>
<dbReference type="SUPFAM" id="SSF47113">
    <property type="entry name" value="Histone-fold"/>
    <property type="match status" value="1"/>
</dbReference>
<protein>
    <recommendedName>
        <fullName>Chromatin accessibility complex protein 1</fullName>
        <shortName>CHRAC-1</shortName>
    </recommendedName>
    <alternativeName>
        <fullName>Chromatin accessibility complex 15 kDa protein</fullName>
        <shortName>CHRAC-15</shortName>
        <shortName>HuCHRAC15</shortName>
    </alternativeName>
    <alternativeName>
        <fullName>DNA polymerase epsilon subunit p15</fullName>
    </alternativeName>
</protein>
<keyword id="KW-0007">Acetylation</keyword>
<keyword id="KW-0175">Coiled coil</keyword>
<keyword id="KW-0238">DNA-binding</keyword>
<keyword id="KW-0239">DNA-directed DNA polymerase</keyword>
<keyword id="KW-0548">Nucleotidyltransferase</keyword>
<keyword id="KW-0539">Nucleus</keyword>
<keyword id="KW-0597">Phosphoprotein</keyword>
<keyword id="KW-1267">Proteomics identification</keyword>
<keyword id="KW-1185">Reference proteome</keyword>
<keyword id="KW-0808">Transferase</keyword>
<gene>
    <name type="primary">CHRAC1</name>
    <name type="synonym">CHRAC15</name>
</gene>
<feature type="initiator methionine" description="Removed" evidence="8 12">
    <location>
        <position position="1"/>
    </location>
</feature>
<feature type="chain" id="PRO_0000089656" description="Chromatin accessibility complex protein 1">
    <location>
        <begin position="2"/>
        <end position="131"/>
    </location>
</feature>
<feature type="region of interest" description="Disordered" evidence="2">
    <location>
        <begin position="109"/>
        <end position="131"/>
    </location>
</feature>
<feature type="coiled-coil region" evidence="1">
    <location>
        <begin position="100"/>
        <end position="124"/>
    </location>
</feature>
<feature type="compositionally biased region" description="Acidic residues" evidence="2">
    <location>
        <begin position="112"/>
        <end position="131"/>
    </location>
</feature>
<feature type="modified residue" description="N-acetylalanine" evidence="8 12">
    <location>
        <position position="2"/>
    </location>
</feature>
<feature type="modified residue" description="N6-acetyllysine" evidence="9">
    <location>
        <position position="102"/>
    </location>
</feature>
<feature type="modified residue" description="Phosphoserine" evidence="7 10 11">
    <location>
        <position position="124"/>
    </location>
</feature>
<feature type="sequence variant" id="VAR_013755" description="In dbSNP:rs2231522.">
    <original>C</original>
    <variation>Y</variation>
    <location>
        <position position="55"/>
    </location>
</feature>
<feature type="sequence variant" id="VAR_013756" description="In dbSNP:rs2231524.">
    <original>H</original>
    <variation>R</variation>
    <location>
        <position position="126"/>
    </location>
</feature>
<accession>Q9NRG0</accession>
<evidence type="ECO:0000255" key="1"/>
<evidence type="ECO:0000256" key="2">
    <source>
        <dbReference type="SAM" id="MobiDB-lite"/>
    </source>
</evidence>
<evidence type="ECO:0000269" key="3">
    <source>
    </source>
</evidence>
<evidence type="ECO:0000269" key="4">
    <source>
    </source>
</evidence>
<evidence type="ECO:0000269" key="5">
    <source>
    </source>
</evidence>
<evidence type="ECO:0000305" key="6"/>
<evidence type="ECO:0007744" key="7">
    <source>
    </source>
</evidence>
<evidence type="ECO:0007744" key="8">
    <source>
    </source>
</evidence>
<evidence type="ECO:0007744" key="9">
    <source>
    </source>
</evidence>
<evidence type="ECO:0007744" key="10">
    <source>
    </source>
</evidence>
<evidence type="ECO:0007744" key="11">
    <source>
    </source>
</evidence>
<evidence type="ECO:0007744" key="12">
    <source>
    </source>
</evidence>
<proteinExistence type="evidence at protein level"/>
<reference key="1">
    <citation type="journal article" date="2000" name="EMBO J.">
        <title>HuCHRAC, a human ISWI chromatin remodelling complex contains hACF1 and two novel histone-fold proteins.</title>
        <authorList>
            <person name="Poot R.A."/>
            <person name="Dellaire G."/>
            <person name="Huelsmann B.B."/>
            <person name="Grimaldi M.A."/>
            <person name="Corona D.F.V."/>
            <person name="Becker P.B."/>
            <person name="Bickmore W.A."/>
            <person name="Varga-Weisz P.D."/>
        </authorList>
    </citation>
    <scope>NUCLEOTIDE SEQUENCE [MRNA]</scope>
    <scope>IDENTIFICATION IN THE CHRAC ISWI CHROMATIN REMODELING COMPLEX</scope>
    <scope>INTERACTION WITH SMARCA5; BAZ1A AND POLE3</scope>
    <scope>TISSUE SPECIFICITY</scope>
</reference>
<reference key="2">
    <citation type="journal article" date="2004" name="Nat. Genet.">
        <title>Complete sequencing and characterization of 21,243 full-length human cDNAs.</title>
        <authorList>
            <person name="Ota T."/>
            <person name="Suzuki Y."/>
            <person name="Nishikawa T."/>
            <person name="Otsuki T."/>
            <person name="Sugiyama T."/>
            <person name="Irie R."/>
            <person name="Wakamatsu A."/>
            <person name="Hayashi K."/>
            <person name="Sato H."/>
            <person name="Nagai K."/>
            <person name="Kimura K."/>
            <person name="Makita H."/>
            <person name="Sekine M."/>
            <person name="Obayashi M."/>
            <person name="Nishi T."/>
            <person name="Shibahara T."/>
            <person name="Tanaka T."/>
            <person name="Ishii S."/>
            <person name="Yamamoto J."/>
            <person name="Saito K."/>
            <person name="Kawai Y."/>
            <person name="Isono Y."/>
            <person name="Nakamura Y."/>
            <person name="Nagahari K."/>
            <person name="Murakami K."/>
            <person name="Yasuda T."/>
            <person name="Iwayanagi T."/>
            <person name="Wagatsuma M."/>
            <person name="Shiratori A."/>
            <person name="Sudo H."/>
            <person name="Hosoiri T."/>
            <person name="Kaku Y."/>
            <person name="Kodaira H."/>
            <person name="Kondo H."/>
            <person name="Sugawara M."/>
            <person name="Takahashi M."/>
            <person name="Kanda K."/>
            <person name="Yokoi T."/>
            <person name="Furuya T."/>
            <person name="Kikkawa E."/>
            <person name="Omura Y."/>
            <person name="Abe K."/>
            <person name="Kamihara K."/>
            <person name="Katsuta N."/>
            <person name="Sato K."/>
            <person name="Tanikawa M."/>
            <person name="Yamazaki M."/>
            <person name="Ninomiya K."/>
            <person name="Ishibashi T."/>
            <person name="Yamashita H."/>
            <person name="Murakawa K."/>
            <person name="Fujimori K."/>
            <person name="Tanai H."/>
            <person name="Kimata M."/>
            <person name="Watanabe M."/>
            <person name="Hiraoka S."/>
            <person name="Chiba Y."/>
            <person name="Ishida S."/>
            <person name="Ono Y."/>
            <person name="Takiguchi S."/>
            <person name="Watanabe S."/>
            <person name="Yosida M."/>
            <person name="Hotuta T."/>
            <person name="Kusano J."/>
            <person name="Kanehori K."/>
            <person name="Takahashi-Fujii A."/>
            <person name="Hara H."/>
            <person name="Tanase T.-O."/>
            <person name="Nomura Y."/>
            <person name="Togiya S."/>
            <person name="Komai F."/>
            <person name="Hara R."/>
            <person name="Takeuchi K."/>
            <person name="Arita M."/>
            <person name="Imose N."/>
            <person name="Musashino K."/>
            <person name="Yuuki H."/>
            <person name="Oshima A."/>
            <person name="Sasaki N."/>
            <person name="Aotsuka S."/>
            <person name="Yoshikawa Y."/>
            <person name="Matsunawa H."/>
            <person name="Ichihara T."/>
            <person name="Shiohata N."/>
            <person name="Sano S."/>
            <person name="Moriya S."/>
            <person name="Momiyama H."/>
            <person name="Satoh N."/>
            <person name="Takami S."/>
            <person name="Terashima Y."/>
            <person name="Suzuki O."/>
            <person name="Nakagawa S."/>
            <person name="Senoh A."/>
            <person name="Mizoguchi H."/>
            <person name="Goto Y."/>
            <person name="Shimizu F."/>
            <person name="Wakebe H."/>
            <person name="Hishigaki H."/>
            <person name="Watanabe T."/>
            <person name="Sugiyama A."/>
            <person name="Takemoto M."/>
            <person name="Kawakami B."/>
            <person name="Yamazaki M."/>
            <person name="Watanabe K."/>
            <person name="Kumagai A."/>
            <person name="Itakura S."/>
            <person name="Fukuzumi Y."/>
            <person name="Fujimori Y."/>
            <person name="Komiyama M."/>
            <person name="Tashiro H."/>
            <person name="Tanigami A."/>
            <person name="Fujiwara T."/>
            <person name="Ono T."/>
            <person name="Yamada K."/>
            <person name="Fujii Y."/>
            <person name="Ozaki K."/>
            <person name="Hirao M."/>
            <person name="Ohmori Y."/>
            <person name="Kawabata A."/>
            <person name="Hikiji T."/>
            <person name="Kobatake N."/>
            <person name="Inagaki H."/>
            <person name="Ikema Y."/>
            <person name="Okamoto S."/>
            <person name="Okitani R."/>
            <person name="Kawakami T."/>
            <person name="Noguchi S."/>
            <person name="Itoh T."/>
            <person name="Shigeta K."/>
            <person name="Senba T."/>
            <person name="Matsumura K."/>
            <person name="Nakajima Y."/>
            <person name="Mizuno T."/>
            <person name="Morinaga M."/>
            <person name="Sasaki M."/>
            <person name="Togashi T."/>
            <person name="Oyama M."/>
            <person name="Hata H."/>
            <person name="Watanabe M."/>
            <person name="Komatsu T."/>
            <person name="Mizushima-Sugano J."/>
            <person name="Satoh T."/>
            <person name="Shirai Y."/>
            <person name="Takahashi Y."/>
            <person name="Nakagawa K."/>
            <person name="Okumura K."/>
            <person name="Nagase T."/>
            <person name="Nomura N."/>
            <person name="Kikuchi H."/>
            <person name="Masuho Y."/>
            <person name="Yamashita R."/>
            <person name="Nakai K."/>
            <person name="Yada T."/>
            <person name="Nakamura Y."/>
            <person name="Ohara O."/>
            <person name="Isogai T."/>
            <person name="Sugano S."/>
        </authorList>
    </citation>
    <scope>NUCLEOTIDE SEQUENCE [LARGE SCALE MRNA]</scope>
    <source>
        <tissue>Placenta</tissue>
    </source>
</reference>
<reference key="3">
    <citation type="journal article" date="2004" name="Genome Res.">
        <title>The status, quality, and expansion of the NIH full-length cDNA project: the Mammalian Gene Collection (MGC).</title>
        <authorList>
            <consortium name="The MGC Project Team"/>
        </authorList>
    </citation>
    <scope>NUCLEOTIDE SEQUENCE [LARGE SCALE MRNA]</scope>
    <source>
        <tissue>Uterus</tissue>
    </source>
</reference>
<reference key="4">
    <citation type="journal article" date="2002" name="Nat. Genet.">
        <title>An ACF1-ISWI chromatin-remodeling complex is required for DNA replication through heterochromatin.</title>
        <authorList>
            <person name="Collins N."/>
            <person name="Poot R.A."/>
            <person name="Kukimoto I."/>
            <person name="Garcia-Jimenez C."/>
            <person name="Dellaire G."/>
            <person name="Varga-Weisz P.D."/>
        </authorList>
    </citation>
    <scope>INTERACTION WITH BAZ1A</scope>
</reference>
<reference key="5">
    <citation type="journal article" date="2004" name="Mol. Cell">
        <title>The histone-fold protein complex CHRAC-15/17 enhances nucleosome sliding and assembly mediated by ACF.</title>
        <authorList>
            <person name="Kukimoto I."/>
            <person name="Elderkin S."/>
            <person name="Grimaldi M."/>
            <person name="Oelgeschlager T."/>
            <person name="Varga-Weisz P.D."/>
        </authorList>
    </citation>
    <scope>FUNCTION</scope>
    <scope>INTERACTION WITH SMARCA5 AND BAZ1A</scope>
</reference>
<reference key="6">
    <citation type="journal article" date="2006" name="Cell">
        <title>Global, in vivo, and site-specific phosphorylation dynamics in signaling networks.</title>
        <authorList>
            <person name="Olsen J.V."/>
            <person name="Blagoev B."/>
            <person name="Gnad F."/>
            <person name="Macek B."/>
            <person name="Kumar C."/>
            <person name="Mortensen P."/>
            <person name="Mann M."/>
        </authorList>
    </citation>
    <scope>IDENTIFICATION BY MASS SPECTROMETRY [LARGE SCALE ANALYSIS]</scope>
    <source>
        <tissue>Cervix carcinoma</tissue>
    </source>
</reference>
<reference key="7">
    <citation type="journal article" date="2008" name="Proc. Natl. Acad. Sci. U.S.A.">
        <title>A quantitative atlas of mitotic phosphorylation.</title>
        <authorList>
            <person name="Dephoure N."/>
            <person name="Zhou C."/>
            <person name="Villen J."/>
            <person name="Beausoleil S.A."/>
            <person name="Bakalarski C.E."/>
            <person name="Elledge S.J."/>
            <person name="Gygi S.P."/>
        </authorList>
    </citation>
    <scope>PHOSPHORYLATION [LARGE SCALE ANALYSIS] AT SER-124</scope>
    <scope>IDENTIFICATION BY MASS SPECTROMETRY [LARGE SCALE ANALYSIS]</scope>
    <source>
        <tissue>Cervix carcinoma</tissue>
    </source>
</reference>
<reference key="8">
    <citation type="journal article" date="2009" name="Anal. Chem.">
        <title>Lys-N and trypsin cover complementary parts of the phosphoproteome in a refined SCX-based approach.</title>
        <authorList>
            <person name="Gauci S."/>
            <person name="Helbig A.O."/>
            <person name="Slijper M."/>
            <person name="Krijgsveld J."/>
            <person name="Heck A.J."/>
            <person name="Mohammed S."/>
        </authorList>
    </citation>
    <scope>ACETYLATION [LARGE SCALE ANALYSIS] AT ALA-2</scope>
    <scope>CLEAVAGE OF INITIATOR METHIONINE [LARGE SCALE ANALYSIS]</scope>
    <scope>IDENTIFICATION BY MASS SPECTROMETRY [LARGE SCALE ANALYSIS]</scope>
</reference>
<reference key="9">
    <citation type="journal article" date="2009" name="Science">
        <title>Lysine acetylation targets protein complexes and co-regulates major cellular functions.</title>
        <authorList>
            <person name="Choudhary C."/>
            <person name="Kumar C."/>
            <person name="Gnad F."/>
            <person name="Nielsen M.L."/>
            <person name="Rehman M."/>
            <person name="Walther T.C."/>
            <person name="Olsen J.V."/>
            <person name="Mann M."/>
        </authorList>
    </citation>
    <scope>ACETYLATION [LARGE SCALE ANALYSIS] AT LYS-102</scope>
    <scope>IDENTIFICATION BY MASS SPECTROMETRY [LARGE SCALE ANALYSIS]</scope>
</reference>
<reference key="10">
    <citation type="journal article" date="2010" name="Sci. Signal.">
        <title>Quantitative phosphoproteomics reveals widespread full phosphorylation site occupancy during mitosis.</title>
        <authorList>
            <person name="Olsen J.V."/>
            <person name="Vermeulen M."/>
            <person name="Santamaria A."/>
            <person name="Kumar C."/>
            <person name="Miller M.L."/>
            <person name="Jensen L.J."/>
            <person name="Gnad F."/>
            <person name="Cox J."/>
            <person name="Jensen T.S."/>
            <person name="Nigg E.A."/>
            <person name="Brunak S."/>
            <person name="Mann M."/>
        </authorList>
    </citation>
    <scope>PHOSPHORYLATION [LARGE SCALE ANALYSIS] AT SER-124</scope>
    <scope>IDENTIFICATION BY MASS SPECTROMETRY [LARGE SCALE ANALYSIS]</scope>
    <source>
        <tissue>Cervix carcinoma</tissue>
    </source>
</reference>
<reference key="11">
    <citation type="journal article" date="2011" name="BMC Syst. Biol.">
        <title>Initial characterization of the human central proteome.</title>
        <authorList>
            <person name="Burkard T.R."/>
            <person name="Planyavsky M."/>
            <person name="Kaupe I."/>
            <person name="Breitwieser F.P."/>
            <person name="Buerckstuemmer T."/>
            <person name="Bennett K.L."/>
            <person name="Superti-Furga G."/>
            <person name="Colinge J."/>
        </authorList>
    </citation>
    <scope>IDENTIFICATION BY MASS SPECTROMETRY [LARGE SCALE ANALYSIS]</scope>
</reference>
<reference key="12">
    <citation type="journal article" date="2011" name="Sci. Signal.">
        <title>System-wide temporal characterization of the proteome and phosphoproteome of human embryonic stem cell differentiation.</title>
        <authorList>
            <person name="Rigbolt K.T."/>
            <person name="Prokhorova T.A."/>
            <person name="Akimov V."/>
            <person name="Henningsen J."/>
            <person name="Johansen P.T."/>
            <person name="Kratchmarova I."/>
            <person name="Kassem M."/>
            <person name="Mann M."/>
            <person name="Olsen J.V."/>
            <person name="Blagoev B."/>
        </authorList>
    </citation>
    <scope>PHOSPHORYLATION [LARGE SCALE ANALYSIS] AT SER-124</scope>
    <scope>IDENTIFICATION BY MASS SPECTROMETRY [LARGE SCALE ANALYSIS]</scope>
</reference>
<reference key="13">
    <citation type="journal article" date="2012" name="Proc. Natl. Acad. Sci. U.S.A.">
        <title>N-terminal acetylome analyses and functional insights of the N-terminal acetyltransferase NatB.</title>
        <authorList>
            <person name="Van Damme P."/>
            <person name="Lasa M."/>
            <person name="Polevoda B."/>
            <person name="Gazquez C."/>
            <person name="Elosegui-Artola A."/>
            <person name="Kim D.S."/>
            <person name="De Juan-Pardo E."/>
            <person name="Demeyer K."/>
            <person name="Hole K."/>
            <person name="Larrea E."/>
            <person name="Timmerman E."/>
            <person name="Prieto J."/>
            <person name="Arnesen T."/>
            <person name="Sherman F."/>
            <person name="Gevaert K."/>
            <person name="Aldabe R."/>
        </authorList>
    </citation>
    <scope>ACETYLATION [LARGE SCALE ANALYSIS] AT ALA-2</scope>
    <scope>CLEAVAGE OF INITIATOR METHIONINE [LARGE SCALE ANALYSIS]</scope>
    <scope>IDENTIFICATION BY MASS SPECTROMETRY [LARGE SCALE ANALYSIS]</scope>
</reference>
<comment type="function">
    <text evidence="5">Forms a complex with DNA polymerase epsilon subunit POLE3 and binds naked DNA, which is then incorporated into chromatin, aided by the nucleosome remodeling activity of ISWI/SNF2H and ACF1. Does not enhance nucleosome sliding activity of the ACF-5 ISWI chromatin remodeling complex (PubMed:14759371).</text>
</comment>
<comment type="subunit">
    <text evidence="3 4 5">Heterodimer with POLE3; binds to DNA (PubMed:10880450). Component of the CHRAC ISWI chromatin remodeling complex at least composed of SMARCA5/SNF2H, BAZ1A/ACF1, CHRAC1 and POLE3; the complex preferentially binds DNA through the CHRAC1-POLE3 heterodimer and possesses ATP-dependent nucleosome-remodeling activity (PubMed:10880450). Within the complex, the heterodimer with POLE3 interacts with SMARCA5/SNF2H; the interaction is direct and enhances nucleosome sliding activity by the SMARCA5/SNF2H and BAZ1A/ACF1 interaction (PubMed:10880450, PubMed:14759371). Within the complex, the heterodimer with POLE3 interacts with BAZ1A/ACF1; the interactions are direct (PubMed:10880450, PubMed:12434153, PubMed:14759371).</text>
</comment>
<comment type="interaction">
    <interactant intactId="EBI-2795492">
        <id>Q9NRG0</id>
    </interactant>
    <interactant intactId="EBI-10175124">
        <id>Q8IZU0</id>
        <label>FAM9B</label>
    </interactant>
    <organismsDiffer>false</organismsDiffer>
    <experiments>7</experiments>
</comment>
<comment type="interaction">
    <interactant intactId="EBI-2795492">
        <id>Q9NRG0</id>
    </interactant>
    <interactant intactId="EBI-744901">
        <id>Q9NRF9</id>
        <label>POLE3</label>
    </interactant>
    <organismsDiffer>false</organismsDiffer>
    <experiments>15</experiments>
</comment>
<comment type="subcellular location">
    <subcellularLocation>
        <location evidence="6">Nucleus</location>
    </subcellularLocation>
</comment>
<comment type="tissue specificity">
    <text evidence="3">Expressed in heart, brain, placenta, lung, liver, skeletal muscle, kidney and pancreas.</text>
</comment>